<proteinExistence type="evidence at transcript level"/>
<name>BAMAT_AMAEX</name>
<organism>
    <name type="scientific">Amanita exitialis</name>
    <name type="common">Guangzhou destroying angel</name>
    <dbReference type="NCBI Taxonomy" id="262245"/>
    <lineage>
        <taxon>Eukaryota</taxon>
        <taxon>Fungi</taxon>
        <taxon>Dikarya</taxon>
        <taxon>Basidiomycota</taxon>
        <taxon>Agaricomycotina</taxon>
        <taxon>Agaricomycetes</taxon>
        <taxon>Agaricomycetidae</taxon>
        <taxon>Agaricales</taxon>
        <taxon>Pluteineae</taxon>
        <taxon>Amanitaceae</taxon>
        <taxon>Amanita</taxon>
    </lineage>
</organism>
<accession>U5L3M7</accession>
<sequence>MSDINATRLPIWGIGCDPCVGDDVTALLTRGEALC</sequence>
<evidence type="ECO:0000250" key="1">
    <source>
        <dbReference type="UniProtKB" id="A0A067SLB9"/>
    </source>
</evidence>
<evidence type="ECO:0000250" key="2">
    <source>
        <dbReference type="UniProtKB" id="A8W7M4"/>
    </source>
</evidence>
<evidence type="ECO:0000250" key="3">
    <source>
        <dbReference type="UniProtKB" id="P85421"/>
    </source>
</evidence>
<evidence type="ECO:0000269" key="4">
    <source>
    </source>
</evidence>
<evidence type="ECO:0000303" key="5">
    <source>
    </source>
</evidence>
<evidence type="ECO:0000303" key="6">
    <source>
    </source>
</evidence>
<evidence type="ECO:0000305" key="7"/>
<evidence type="ECO:0000305" key="8">
    <source>
    </source>
</evidence>
<dbReference type="EMBL" id="KF387477">
    <property type="protein sequence ID" value="AGW83701.1"/>
    <property type="molecule type" value="mRNA"/>
</dbReference>
<dbReference type="EMBL" id="KF387487">
    <property type="protein sequence ID" value="AGW83711.1"/>
    <property type="molecule type" value="mRNA"/>
</dbReference>
<dbReference type="GO" id="GO:0090729">
    <property type="term" value="F:toxin activity"/>
    <property type="evidence" value="ECO:0007669"/>
    <property type="project" value="UniProtKB-KW"/>
</dbReference>
<dbReference type="InterPro" id="IPR027582">
    <property type="entry name" value="Amanitin/phalloidin"/>
</dbReference>
<dbReference type="NCBIfam" id="TIGR04309">
    <property type="entry name" value="amanitin"/>
    <property type="match status" value="1"/>
</dbReference>
<dbReference type="Pfam" id="PF24112">
    <property type="entry name" value="Amanitin"/>
    <property type="match status" value="1"/>
</dbReference>
<reference key="1">
    <citation type="journal article" date="2013" name="Gene">
        <title>Illumina-based de novo transcriptome sequencing and analysis of Amanita exitialis basidiocarps.</title>
        <authorList>
            <person name="Li P."/>
            <person name="Deng W.Q."/>
            <person name="Li T.H."/>
            <person name="Song B."/>
            <person name="Shen Y.H."/>
        </authorList>
    </citation>
    <scope>NUCLEOTIDE SEQUENCE [MRNA]</scope>
    <scope>FUNCTION</scope>
    <scope>TISSUE SPECIFICITY</scope>
</reference>
<reference key="2">
    <citation type="journal article" date="2002" name="J. Toxicol. Clin. Toxicol.">
        <title>Treatment of amatoxin poisoning: 20-year retrospective analysis.</title>
        <authorList>
            <person name="Enjalbert F."/>
            <person name="Rapior S."/>
            <person name="Nouguier-Soule J."/>
            <person name="Guillon S."/>
            <person name="Amouroux N."/>
            <person name="Cabot C."/>
        </authorList>
    </citation>
    <scope>REVIEW ON TOXICITY</scope>
</reference>
<comment type="function">
    <text evidence="8">Toxin belonging to the bicyclic octapeptides amatoxins that acts by binding non-competitively to RNA polymerase II and greatly slowing the elongation of transcripts from target promoters (PubMed:24050899).</text>
</comment>
<comment type="tissue specificity">
    <text evidence="4">Expressed in basidiocarps (PubMed:24050899).</text>
</comment>
<comment type="PTM">
    <text evidence="1 8">Processed by the macrocyclase-peptidase enzyme POPB to yield a toxic cyclic octapeptide (PubMed:24050899). POPB first removes 10 residues from the N-terminus (By similarity). Conformational trapping of the remaining peptide forces the enzyme to release this intermediate rather than proceed to macrocyclization (By similarity). The enzyme rebinds the remaining peptide in a different conformation and catalyzes macrocyclization of the N-terminal 8 residues (By similarity).</text>
</comment>
<comment type="miscellaneous">
    <text evidence="5">The typical symptoms of amatoxin poisoning are gastro-intestinal distress beginning 6-12 hours after ingestion, a remission phase lasting 12-24 hours, and progressive loss of liver function culminating in death within 3-5 days (PubMed:12475187). One of the few effective treatments is liver transplantation (PubMed:12475187).</text>
</comment>
<comment type="similarity">
    <text evidence="7">Belongs to the MSDIN fungal toxin family.</text>
</comment>
<keyword id="KW-0883">Thioether bond</keyword>
<keyword id="KW-0800">Toxin</keyword>
<protein>
    <recommendedName>
        <fullName evidence="6">Beta-amanitin proprotein</fullName>
    </recommendedName>
    <component>
        <recommendedName>
            <fullName evidence="6">Beta-amanitin</fullName>
        </recommendedName>
    </component>
</protein>
<feature type="propeptide" id="PRO_0000443752" evidence="2">
    <location>
        <begin position="1"/>
        <end position="10"/>
    </location>
</feature>
<feature type="peptide" id="PRO_0000443753" description="Beta-amanitin" evidence="2">
    <location>
        <begin position="11"/>
        <end position="18"/>
    </location>
</feature>
<feature type="propeptide" id="PRO_0000443754" evidence="2">
    <location>
        <begin position="19"/>
        <end position="35"/>
    </location>
</feature>
<feature type="cross-link" description="Cyclopeptide (Ile-Pro)" evidence="2">
    <location>
        <begin position="11"/>
        <end position="18"/>
    </location>
</feature>
<feature type="cross-link" description="2'-cysteinyl-6'-hydroxytryptophan sulfoxide (Trp-Cys)" evidence="3">
    <location>
        <begin position="12"/>
        <end position="16"/>
    </location>
</feature>